<reference key="1">
    <citation type="submission" date="2009-02" db="EMBL/GenBank/DDBJ databases">
        <title>Vibrio splendidus str. LGP32 complete genome.</title>
        <authorList>
            <person name="Mazel D."/>
            <person name="Le Roux F."/>
        </authorList>
    </citation>
    <scope>NUCLEOTIDE SEQUENCE [LARGE SCALE GENOMIC DNA]</scope>
    <source>
        <strain>LGP32</strain>
    </source>
</reference>
<dbReference type="EC" id="2.7.8.7" evidence="1"/>
<dbReference type="EMBL" id="FM954972">
    <property type="protein sequence ID" value="CAV19821.1"/>
    <property type="molecule type" value="Genomic_DNA"/>
</dbReference>
<dbReference type="SMR" id="B7VK75"/>
<dbReference type="STRING" id="575788.VS_2615"/>
<dbReference type="KEGG" id="vsp:VS_2615"/>
<dbReference type="eggNOG" id="COG0736">
    <property type="taxonomic scope" value="Bacteria"/>
</dbReference>
<dbReference type="HOGENOM" id="CLU_089696_3_1_6"/>
<dbReference type="Proteomes" id="UP000009100">
    <property type="component" value="Chromosome 1"/>
</dbReference>
<dbReference type="GO" id="GO:0005737">
    <property type="term" value="C:cytoplasm"/>
    <property type="evidence" value="ECO:0007669"/>
    <property type="project" value="UniProtKB-SubCell"/>
</dbReference>
<dbReference type="GO" id="GO:0008897">
    <property type="term" value="F:holo-[acyl-carrier-protein] synthase activity"/>
    <property type="evidence" value="ECO:0007669"/>
    <property type="project" value="UniProtKB-UniRule"/>
</dbReference>
<dbReference type="GO" id="GO:0000287">
    <property type="term" value="F:magnesium ion binding"/>
    <property type="evidence" value="ECO:0007669"/>
    <property type="project" value="UniProtKB-UniRule"/>
</dbReference>
<dbReference type="GO" id="GO:0006633">
    <property type="term" value="P:fatty acid biosynthetic process"/>
    <property type="evidence" value="ECO:0007669"/>
    <property type="project" value="UniProtKB-UniRule"/>
</dbReference>
<dbReference type="FunFam" id="3.90.470.20:FF:000001">
    <property type="entry name" value="Holo-[acyl-carrier-protein] synthase"/>
    <property type="match status" value="1"/>
</dbReference>
<dbReference type="Gene3D" id="3.90.470.20">
    <property type="entry name" value="4'-phosphopantetheinyl transferase domain"/>
    <property type="match status" value="1"/>
</dbReference>
<dbReference type="HAMAP" id="MF_00101">
    <property type="entry name" value="AcpS"/>
    <property type="match status" value="1"/>
</dbReference>
<dbReference type="InterPro" id="IPR008278">
    <property type="entry name" value="4-PPantetheinyl_Trfase_dom"/>
</dbReference>
<dbReference type="InterPro" id="IPR037143">
    <property type="entry name" value="4-PPantetheinyl_Trfase_dom_sf"/>
</dbReference>
<dbReference type="InterPro" id="IPR002582">
    <property type="entry name" value="ACPS"/>
</dbReference>
<dbReference type="InterPro" id="IPR004568">
    <property type="entry name" value="Ppantetheine-prot_Trfase_dom"/>
</dbReference>
<dbReference type="NCBIfam" id="TIGR00516">
    <property type="entry name" value="acpS"/>
    <property type="match status" value="1"/>
</dbReference>
<dbReference type="NCBIfam" id="TIGR00556">
    <property type="entry name" value="pantethn_trn"/>
    <property type="match status" value="1"/>
</dbReference>
<dbReference type="Pfam" id="PF01648">
    <property type="entry name" value="ACPS"/>
    <property type="match status" value="1"/>
</dbReference>
<dbReference type="SUPFAM" id="SSF56214">
    <property type="entry name" value="4'-phosphopantetheinyl transferase"/>
    <property type="match status" value="1"/>
</dbReference>
<feature type="chain" id="PRO_1000118834" description="Holo-[acyl-carrier-protein] synthase">
    <location>
        <begin position="1"/>
        <end position="126"/>
    </location>
</feature>
<feature type="binding site" evidence="1">
    <location>
        <position position="9"/>
    </location>
    <ligand>
        <name>Mg(2+)</name>
        <dbReference type="ChEBI" id="CHEBI:18420"/>
    </ligand>
</feature>
<feature type="binding site" evidence="1">
    <location>
        <position position="58"/>
    </location>
    <ligand>
        <name>Mg(2+)</name>
        <dbReference type="ChEBI" id="CHEBI:18420"/>
    </ligand>
</feature>
<organism>
    <name type="scientific">Vibrio atlanticus (strain LGP32)</name>
    <name type="common">Vibrio splendidus (strain Mel32)</name>
    <dbReference type="NCBI Taxonomy" id="575788"/>
    <lineage>
        <taxon>Bacteria</taxon>
        <taxon>Pseudomonadati</taxon>
        <taxon>Pseudomonadota</taxon>
        <taxon>Gammaproteobacteria</taxon>
        <taxon>Vibrionales</taxon>
        <taxon>Vibrionaceae</taxon>
        <taxon>Vibrio</taxon>
    </lineage>
</organism>
<comment type="function">
    <text evidence="1">Transfers the 4'-phosphopantetheine moiety from coenzyme A to a Ser of acyl-carrier-protein.</text>
</comment>
<comment type="catalytic activity">
    <reaction evidence="1">
        <text>apo-[ACP] + CoA = holo-[ACP] + adenosine 3',5'-bisphosphate + H(+)</text>
        <dbReference type="Rhea" id="RHEA:12068"/>
        <dbReference type="Rhea" id="RHEA-COMP:9685"/>
        <dbReference type="Rhea" id="RHEA-COMP:9690"/>
        <dbReference type="ChEBI" id="CHEBI:15378"/>
        <dbReference type="ChEBI" id="CHEBI:29999"/>
        <dbReference type="ChEBI" id="CHEBI:57287"/>
        <dbReference type="ChEBI" id="CHEBI:58343"/>
        <dbReference type="ChEBI" id="CHEBI:64479"/>
        <dbReference type="EC" id="2.7.8.7"/>
    </reaction>
</comment>
<comment type="cofactor">
    <cofactor evidence="1">
        <name>Mg(2+)</name>
        <dbReference type="ChEBI" id="CHEBI:18420"/>
    </cofactor>
</comment>
<comment type="subcellular location">
    <subcellularLocation>
        <location evidence="1">Cytoplasm</location>
    </subcellularLocation>
</comment>
<comment type="similarity">
    <text evidence="1">Belongs to the P-Pant transferase superfamily. AcpS family.</text>
</comment>
<sequence>MAVVGLGTDIAEIERVEKALSRSGEAFAQRILTDSEFEVFQQLKQKGRYLAKRFAAKEAASKALGTGIALGVTFHDFEISNDEHGKPVLSLHKKAREIADASGTKSIHLTISDERHYAVATVLLES</sequence>
<evidence type="ECO:0000255" key="1">
    <source>
        <dbReference type="HAMAP-Rule" id="MF_00101"/>
    </source>
</evidence>
<accession>B7VK75</accession>
<proteinExistence type="inferred from homology"/>
<keyword id="KW-0963">Cytoplasm</keyword>
<keyword id="KW-0275">Fatty acid biosynthesis</keyword>
<keyword id="KW-0276">Fatty acid metabolism</keyword>
<keyword id="KW-0444">Lipid biosynthesis</keyword>
<keyword id="KW-0443">Lipid metabolism</keyword>
<keyword id="KW-0460">Magnesium</keyword>
<keyword id="KW-0479">Metal-binding</keyword>
<keyword id="KW-0808">Transferase</keyword>
<protein>
    <recommendedName>
        <fullName evidence="1">Holo-[acyl-carrier-protein] synthase</fullName>
        <shortName evidence="1">Holo-ACP synthase</shortName>
        <ecNumber evidence="1">2.7.8.7</ecNumber>
    </recommendedName>
    <alternativeName>
        <fullName evidence="1">4'-phosphopantetheinyl transferase AcpS</fullName>
    </alternativeName>
</protein>
<name>ACPS_VIBA3</name>
<gene>
    <name evidence="1" type="primary">acpS</name>
    <name type="ordered locus">VS_2615</name>
</gene>